<gene>
    <name evidence="6 7 11" type="primary">NdufA3</name>
    <name evidence="8" type="synonym">Prto</name>
    <name evidence="11" type="ORF">CG9034</name>
</gene>
<reference evidence="12" key="1">
    <citation type="journal article" date="2000" name="Science">
        <title>The genome sequence of Drosophila melanogaster.</title>
        <authorList>
            <person name="Adams M.D."/>
            <person name="Celniker S.E."/>
            <person name="Holt R.A."/>
            <person name="Evans C.A."/>
            <person name="Gocayne J.D."/>
            <person name="Amanatides P.G."/>
            <person name="Scherer S.E."/>
            <person name="Li P.W."/>
            <person name="Hoskins R.A."/>
            <person name="Galle R.F."/>
            <person name="George R.A."/>
            <person name="Lewis S.E."/>
            <person name="Richards S."/>
            <person name="Ashburner M."/>
            <person name="Henderson S.N."/>
            <person name="Sutton G.G."/>
            <person name="Wortman J.R."/>
            <person name="Yandell M.D."/>
            <person name="Zhang Q."/>
            <person name="Chen L.X."/>
            <person name="Brandon R.C."/>
            <person name="Rogers Y.-H.C."/>
            <person name="Blazej R.G."/>
            <person name="Champe M."/>
            <person name="Pfeiffer B.D."/>
            <person name="Wan K.H."/>
            <person name="Doyle C."/>
            <person name="Baxter E.G."/>
            <person name="Helt G."/>
            <person name="Nelson C.R."/>
            <person name="Miklos G.L.G."/>
            <person name="Abril J.F."/>
            <person name="Agbayani A."/>
            <person name="An H.-J."/>
            <person name="Andrews-Pfannkoch C."/>
            <person name="Baldwin D."/>
            <person name="Ballew R.M."/>
            <person name="Basu A."/>
            <person name="Baxendale J."/>
            <person name="Bayraktaroglu L."/>
            <person name="Beasley E.M."/>
            <person name="Beeson K.Y."/>
            <person name="Benos P.V."/>
            <person name="Berman B.P."/>
            <person name="Bhandari D."/>
            <person name="Bolshakov S."/>
            <person name="Borkova D."/>
            <person name="Botchan M.R."/>
            <person name="Bouck J."/>
            <person name="Brokstein P."/>
            <person name="Brottier P."/>
            <person name="Burtis K.C."/>
            <person name="Busam D.A."/>
            <person name="Butler H."/>
            <person name="Cadieu E."/>
            <person name="Center A."/>
            <person name="Chandra I."/>
            <person name="Cherry J.M."/>
            <person name="Cawley S."/>
            <person name="Dahlke C."/>
            <person name="Davenport L.B."/>
            <person name="Davies P."/>
            <person name="de Pablos B."/>
            <person name="Delcher A."/>
            <person name="Deng Z."/>
            <person name="Mays A.D."/>
            <person name="Dew I."/>
            <person name="Dietz S.M."/>
            <person name="Dodson K."/>
            <person name="Doup L.E."/>
            <person name="Downes M."/>
            <person name="Dugan-Rocha S."/>
            <person name="Dunkov B.C."/>
            <person name="Dunn P."/>
            <person name="Durbin K.J."/>
            <person name="Evangelista C.C."/>
            <person name="Ferraz C."/>
            <person name="Ferriera S."/>
            <person name="Fleischmann W."/>
            <person name="Fosler C."/>
            <person name="Gabrielian A.E."/>
            <person name="Garg N.S."/>
            <person name="Gelbart W.M."/>
            <person name="Glasser K."/>
            <person name="Glodek A."/>
            <person name="Gong F."/>
            <person name="Gorrell J.H."/>
            <person name="Gu Z."/>
            <person name="Guan P."/>
            <person name="Harris M."/>
            <person name="Harris N.L."/>
            <person name="Harvey D.A."/>
            <person name="Heiman T.J."/>
            <person name="Hernandez J.R."/>
            <person name="Houck J."/>
            <person name="Hostin D."/>
            <person name="Houston K.A."/>
            <person name="Howland T.J."/>
            <person name="Wei M.-H."/>
            <person name="Ibegwam C."/>
            <person name="Jalali M."/>
            <person name="Kalush F."/>
            <person name="Karpen G.H."/>
            <person name="Ke Z."/>
            <person name="Kennison J.A."/>
            <person name="Ketchum K.A."/>
            <person name="Kimmel B.E."/>
            <person name="Kodira C.D."/>
            <person name="Kraft C.L."/>
            <person name="Kravitz S."/>
            <person name="Kulp D."/>
            <person name="Lai Z."/>
            <person name="Lasko P."/>
            <person name="Lei Y."/>
            <person name="Levitsky A.A."/>
            <person name="Li J.H."/>
            <person name="Li Z."/>
            <person name="Liang Y."/>
            <person name="Lin X."/>
            <person name="Liu X."/>
            <person name="Mattei B."/>
            <person name="McIntosh T.C."/>
            <person name="McLeod M.P."/>
            <person name="McPherson D."/>
            <person name="Merkulov G."/>
            <person name="Milshina N.V."/>
            <person name="Mobarry C."/>
            <person name="Morris J."/>
            <person name="Moshrefi A."/>
            <person name="Mount S.M."/>
            <person name="Moy M."/>
            <person name="Murphy B."/>
            <person name="Murphy L."/>
            <person name="Muzny D.M."/>
            <person name="Nelson D.L."/>
            <person name="Nelson D.R."/>
            <person name="Nelson K.A."/>
            <person name="Nixon K."/>
            <person name="Nusskern D.R."/>
            <person name="Pacleb J.M."/>
            <person name="Palazzolo M."/>
            <person name="Pittman G.S."/>
            <person name="Pan S."/>
            <person name="Pollard J."/>
            <person name="Puri V."/>
            <person name="Reese M.G."/>
            <person name="Reinert K."/>
            <person name="Remington K."/>
            <person name="Saunders R.D.C."/>
            <person name="Scheeler F."/>
            <person name="Shen H."/>
            <person name="Shue B.C."/>
            <person name="Siden-Kiamos I."/>
            <person name="Simpson M."/>
            <person name="Skupski M.P."/>
            <person name="Smith T.J."/>
            <person name="Spier E."/>
            <person name="Spradling A.C."/>
            <person name="Stapleton M."/>
            <person name="Strong R."/>
            <person name="Sun E."/>
            <person name="Svirskas R."/>
            <person name="Tector C."/>
            <person name="Turner R."/>
            <person name="Venter E."/>
            <person name="Wang A.H."/>
            <person name="Wang X."/>
            <person name="Wang Z.-Y."/>
            <person name="Wassarman D.A."/>
            <person name="Weinstock G.M."/>
            <person name="Weissenbach J."/>
            <person name="Williams S.M."/>
            <person name="Woodage T."/>
            <person name="Worley K.C."/>
            <person name="Wu D."/>
            <person name="Yang S."/>
            <person name="Yao Q.A."/>
            <person name="Ye J."/>
            <person name="Yeh R.-F."/>
            <person name="Zaveri J.S."/>
            <person name="Zhan M."/>
            <person name="Zhang G."/>
            <person name="Zhao Q."/>
            <person name="Zheng L."/>
            <person name="Zheng X.H."/>
            <person name="Zhong F.N."/>
            <person name="Zhong W."/>
            <person name="Zhou X."/>
            <person name="Zhu S.C."/>
            <person name="Zhu X."/>
            <person name="Smith H.O."/>
            <person name="Gibbs R.A."/>
            <person name="Myers E.W."/>
            <person name="Rubin G.M."/>
            <person name="Venter J.C."/>
        </authorList>
    </citation>
    <scope>NUCLEOTIDE SEQUENCE [LARGE SCALE GENOMIC DNA]</scope>
    <source>
        <strain evidence="12">Berkeley</strain>
    </source>
</reference>
<reference evidence="12" key="2">
    <citation type="journal article" date="2002" name="Genome Biol.">
        <title>Annotation of the Drosophila melanogaster euchromatic genome: a systematic review.</title>
        <authorList>
            <person name="Misra S."/>
            <person name="Crosby M.A."/>
            <person name="Mungall C.J."/>
            <person name="Matthews B.B."/>
            <person name="Campbell K.S."/>
            <person name="Hradecky P."/>
            <person name="Huang Y."/>
            <person name="Kaminker J.S."/>
            <person name="Millburn G.H."/>
            <person name="Prochnik S.E."/>
            <person name="Smith C.D."/>
            <person name="Tupy J.L."/>
            <person name="Whitfield E.J."/>
            <person name="Bayraktaroglu L."/>
            <person name="Berman B.P."/>
            <person name="Bettencourt B.R."/>
            <person name="Celniker S.E."/>
            <person name="de Grey A.D.N.J."/>
            <person name="Drysdale R.A."/>
            <person name="Harris N.L."/>
            <person name="Richter J."/>
            <person name="Russo S."/>
            <person name="Schroeder A.J."/>
            <person name="Shu S.Q."/>
            <person name="Stapleton M."/>
            <person name="Yamada C."/>
            <person name="Ashburner M."/>
            <person name="Gelbart W.M."/>
            <person name="Rubin G.M."/>
            <person name="Lewis S.E."/>
        </authorList>
    </citation>
    <scope>GENOME REANNOTATION</scope>
    <source>
        <strain evidence="12">Berkeley</strain>
    </source>
</reference>
<reference evidence="10" key="3">
    <citation type="journal article" date="2002" name="Genome Biol.">
        <title>A Drosophila full-length cDNA resource.</title>
        <authorList>
            <person name="Stapleton M."/>
            <person name="Carlson J.W."/>
            <person name="Brokstein P."/>
            <person name="Yu C."/>
            <person name="Champe M."/>
            <person name="George R.A."/>
            <person name="Guarin H."/>
            <person name="Kronmiller B."/>
            <person name="Pacleb J.M."/>
            <person name="Park S."/>
            <person name="Wan K.H."/>
            <person name="Rubin G.M."/>
            <person name="Celniker S.E."/>
        </authorList>
    </citation>
    <scope>NUCLEOTIDE SEQUENCE [LARGE SCALE MRNA]</scope>
    <source>
        <strain evidence="10">Berkeley</strain>
        <tissue evidence="10">Head</tissue>
    </source>
</reference>
<reference evidence="9" key="4">
    <citation type="journal article" date="2023" name="Front. Cell Dev. Biol.">
        <title>Purriato is a conserved small open reading frame gene that interacts with the CASA pathway to regulate muscle homeostasis and epithelial tissue growth in Drosophila.</title>
        <authorList>
            <person name="Pueyo J.I."/>
            <person name="Salazar J."/>
            <person name="Grincho C."/>
            <person name="Berni J."/>
            <person name="Towler B.P."/>
            <person name="Newbury S.F."/>
        </authorList>
    </citation>
    <scope>FUNCTION</scope>
    <scope>SUBCELLULAR LOCATION</scope>
    <scope>DISRUPTION PHENOTYPE</scope>
</reference>
<reference evidence="15 16" key="5">
    <citation type="journal article" date="2023" name="Elife">
        <title>Resting mitochondrial complex I from Drosophila melanogaster adopts a helix-locked state.</title>
        <authorList>
            <person name="Padavannil A."/>
            <person name="Murari A."/>
            <person name="Rhooms S.K."/>
            <person name="Owusu-Ansah E."/>
            <person name="Letts J.A."/>
        </authorList>
    </citation>
    <scope>STRUCTURE BY ELECTRON MICROSCOPY (3.30 ANGSTROMS)</scope>
    <scope>FUNCTION</scope>
    <scope>SUBUNIT</scope>
</reference>
<reference evidence="13 14" key="6">
    <citation type="journal article" date="2023" name="Elife">
        <title>Cryo-EM structures of mitochondrial respiratory complex I from Drosophila melanogaster.</title>
        <authorList>
            <person name="Agip A.A."/>
            <person name="Chung I."/>
            <person name="Sanchez-Martinez A."/>
            <person name="Whitworth A.J."/>
            <person name="Hirst J."/>
        </authorList>
    </citation>
    <scope>STRUCTURE BY ELECTRON MICROSCOPY (3.28 ANGSTROMS) OF 11-76</scope>
    <scope>FUNCTION</scope>
    <scope>SUBUNIT</scope>
    <scope>IDENTIFICATION BY MASS SPECTROMETRY</scope>
</reference>
<feature type="chain" id="PRO_0000460839" description="NADH dehydrogenase [ubiquinone] 1 alpha subcomplex subunit 3">
    <location>
        <begin position="1"/>
        <end position="77"/>
    </location>
</feature>
<feature type="transmembrane region" description="Helical" evidence="2">
    <location>
        <begin position="23"/>
        <end position="45"/>
    </location>
</feature>
<feature type="helix" evidence="17">
    <location>
        <begin position="12"/>
        <end position="19"/>
    </location>
</feature>
<feature type="helix" evidence="17">
    <location>
        <begin position="21"/>
        <end position="46"/>
    </location>
</feature>
<feature type="turn" evidence="17">
    <location>
        <begin position="47"/>
        <end position="50"/>
    </location>
</feature>
<feature type="strand" evidence="17">
    <location>
        <begin position="60"/>
        <end position="62"/>
    </location>
</feature>
<feature type="helix" evidence="17">
    <location>
        <begin position="66"/>
        <end position="70"/>
    </location>
</feature>
<evidence type="ECO:0000250" key="1">
    <source>
        <dbReference type="UniProtKB" id="O95167"/>
    </source>
</evidence>
<evidence type="ECO:0000255" key="2"/>
<evidence type="ECO:0000269" key="3">
    <source>
    </source>
</evidence>
<evidence type="ECO:0000269" key="4">
    <source>
    </source>
</evidence>
<evidence type="ECO:0000269" key="5">
    <source>
    </source>
</evidence>
<evidence type="ECO:0000303" key="6">
    <source>
    </source>
</evidence>
<evidence type="ECO:0000303" key="7">
    <source>
    </source>
</evidence>
<evidence type="ECO:0000303" key="8">
    <source>
    </source>
</evidence>
<evidence type="ECO:0000305" key="9"/>
<evidence type="ECO:0000312" key="10">
    <source>
        <dbReference type="EMBL" id="AAL49355.1"/>
    </source>
</evidence>
<evidence type="ECO:0000312" key="11">
    <source>
        <dbReference type="FlyBase" id="FBgn0040931"/>
    </source>
</evidence>
<evidence type="ECO:0000312" key="12">
    <source>
        <dbReference type="Proteomes" id="UP000000803"/>
    </source>
</evidence>
<evidence type="ECO:0007744" key="13">
    <source>
        <dbReference type="PDB" id="8B9Z"/>
    </source>
</evidence>
<evidence type="ECO:0007744" key="14">
    <source>
        <dbReference type="PDB" id="8BA0"/>
    </source>
</evidence>
<evidence type="ECO:0007744" key="15">
    <source>
        <dbReference type="PDB" id="8ESW"/>
    </source>
</evidence>
<evidence type="ECO:0007744" key="16">
    <source>
        <dbReference type="PDB" id="8ESZ"/>
    </source>
</evidence>
<evidence type="ECO:0007829" key="17">
    <source>
        <dbReference type="PDB" id="8B9Z"/>
    </source>
</evidence>
<sequence length="77" mass="8400">MSASAARGSTSLLKRAWNEIPDIVGGSALALAGIVMATIGVANYYAKDGDNRRYKLGYVVYRHDDPRALKVRNDEDD</sequence>
<protein>
    <recommendedName>
        <fullName evidence="9">NADH dehydrogenase [ubiquinone] 1 alpha subcomplex subunit 3</fullName>
    </recommendedName>
    <alternativeName>
        <fullName evidence="11">NADH:ubiquinone oxidoreductase subunit A3</fullName>
    </alternativeName>
    <alternativeName>
        <fullName evidence="8">Protein purriato</fullName>
    </alternativeName>
</protein>
<comment type="function">
    <text evidence="1 3 4 5">Accessory subunit of the mitochondrial membrane respiratory chain NADH dehydrogenase (Complex I), that is believed not to be involved in catalysis (PubMed:36622099, PubMed:36952377). Complex I functions in the transfer of electrons from NADH to the respiratory chain (By similarity). The immediate electron acceptor for the enzyme is believed to be ubiquinone (By similarity). Required for the maintenance of muscle integrity and for cell proliferation in the wing imaginal disc epithelium, possibly by interacting with the chaperone-assisted selective autophagy (CASA) pathway (PubMed:36968202).</text>
</comment>
<comment type="subunit">
    <text evidence="3 4">Complex I is composed of 43 different subunits.</text>
</comment>
<comment type="subcellular location">
    <subcellularLocation>
        <location evidence="1">Mitochondrion inner membrane</location>
        <topology evidence="2">Single-pass membrane protein</topology>
    </subcellularLocation>
    <subcellularLocation>
        <location evidence="5">Cytoplasm</location>
        <location evidence="5">Myofibril</location>
        <location evidence="5">Sarcomere</location>
    </subcellularLocation>
    <subcellularLocation>
        <location evidence="5">Cytoplasm</location>
        <location evidence="5">Myofibril</location>
        <location evidence="5">Sarcomere</location>
        <location evidence="5">Z line</location>
    </subcellularLocation>
    <text evidence="5">Localizes to sarcomeres and Z lines in larval muscle.</text>
</comment>
<comment type="disruption phenotype">
    <text evidence="5">RNAi-mediated knockdown in muscle results in defective muscle contraction, sarcomeric defects and loss of muscle integrity (PubMed:36968202). RNAi-mediated knockdown in wing imaginal discs results in reduced wing size (PubMed:36968202).</text>
</comment>
<comment type="miscellaneous">
    <text evidence="3 4">Displays weak sequence similarity with mammalian NDUFA3 but is present in the density map in cryo-EM structures in the location of mammalian NDUFA3.</text>
</comment>
<comment type="similarity">
    <text evidence="9">Belongs to the complex I NDUFA3 subunit family.</text>
</comment>
<proteinExistence type="evidence at protein level"/>
<dbReference type="EMBL" id="AE014298">
    <property type="protein sequence ID" value="AAF46455.1"/>
    <property type="molecule type" value="Genomic_DNA"/>
</dbReference>
<dbReference type="EMBL" id="AE014298">
    <property type="protein sequence ID" value="AHN59508.1"/>
    <property type="molecule type" value="Genomic_DNA"/>
</dbReference>
<dbReference type="EMBL" id="AY071733">
    <property type="protein sequence ID" value="AAL49355.1"/>
    <property type="molecule type" value="mRNA"/>
</dbReference>
<dbReference type="RefSeq" id="NP_001285037.1">
    <property type="nucleotide sequence ID" value="NM_001298108.1"/>
</dbReference>
<dbReference type="RefSeq" id="NP_652538.1">
    <property type="nucleotide sequence ID" value="NM_144281.4"/>
</dbReference>
<dbReference type="PDB" id="8B9Z">
    <property type="method" value="EM"/>
    <property type="resolution" value="3.28 A"/>
    <property type="chains" value="b=11-76"/>
</dbReference>
<dbReference type="PDB" id="8BA0">
    <property type="method" value="EM"/>
    <property type="resolution" value="3.68 A"/>
    <property type="chains" value="b=11-76"/>
</dbReference>
<dbReference type="PDB" id="8ESW">
    <property type="method" value="EM"/>
    <property type="resolution" value="3.30 A"/>
    <property type="chains" value="A3=1-77"/>
</dbReference>
<dbReference type="PDB" id="8ESZ">
    <property type="method" value="EM"/>
    <property type="resolution" value="3.40 A"/>
    <property type="chains" value="A3=1-77"/>
</dbReference>
<dbReference type="PDBsum" id="8B9Z"/>
<dbReference type="PDBsum" id="8BA0"/>
<dbReference type="PDBsum" id="8ESW"/>
<dbReference type="PDBsum" id="8ESZ"/>
<dbReference type="EMDB" id="EMD-15936"/>
<dbReference type="EMDB" id="EMD-15937"/>
<dbReference type="EMDB" id="EMD-28581"/>
<dbReference type="EMDB" id="EMD-28582"/>
<dbReference type="SMR" id="Q9W380"/>
<dbReference type="ComplexPortal" id="CPX-8628">
    <property type="entry name" value="Mitochondrial respiratory chain complex I"/>
</dbReference>
<dbReference type="FunCoup" id="Q9W380">
    <property type="interactions" value="13"/>
</dbReference>
<dbReference type="IntAct" id="Q9W380">
    <property type="interactions" value="1"/>
</dbReference>
<dbReference type="STRING" id="7227.FBpp0309301"/>
<dbReference type="PaxDb" id="7227-FBpp0071278"/>
<dbReference type="DNASU" id="50405"/>
<dbReference type="EnsemblMetazoa" id="FBtr0071343">
    <property type="protein sequence ID" value="FBpp0071278"/>
    <property type="gene ID" value="FBgn0040931"/>
</dbReference>
<dbReference type="EnsemblMetazoa" id="FBtr0340342">
    <property type="protein sequence ID" value="FBpp0309301"/>
    <property type="gene ID" value="FBgn0040931"/>
</dbReference>
<dbReference type="GeneID" id="50405"/>
<dbReference type="KEGG" id="dme:Dmel_CG9034"/>
<dbReference type="UCSC" id="CG9034-RA">
    <property type="organism name" value="d. melanogaster"/>
</dbReference>
<dbReference type="AGR" id="FB:FBgn0040931"/>
<dbReference type="CTD" id="4696"/>
<dbReference type="FlyBase" id="FBgn0040931">
    <property type="gene designation" value="NdufA3"/>
</dbReference>
<dbReference type="VEuPathDB" id="VectorBase:FBgn0040931"/>
<dbReference type="eggNOG" id="ENOG502S7C9">
    <property type="taxonomic scope" value="Eukaryota"/>
</dbReference>
<dbReference type="HOGENOM" id="CLU_177236_0_0_1"/>
<dbReference type="OMA" id="RGWHEIP"/>
<dbReference type="OrthoDB" id="6600151at2759"/>
<dbReference type="BioGRID-ORCS" id="50405">
    <property type="hits" value="1 hit in 1 CRISPR screen"/>
</dbReference>
<dbReference type="GenomeRNAi" id="50405"/>
<dbReference type="Proteomes" id="UP000000803">
    <property type="component" value="Chromosome X"/>
</dbReference>
<dbReference type="Bgee" id="FBgn0040931">
    <property type="expression patterns" value="Expressed in dorsal cluster neuron (Drosophila) in brain and 218 other cell types or tissues"/>
</dbReference>
<dbReference type="GO" id="GO:0005743">
    <property type="term" value="C:mitochondrial inner membrane"/>
    <property type="evidence" value="ECO:0000305"/>
    <property type="project" value="FlyBase"/>
</dbReference>
<dbReference type="GO" id="GO:0045271">
    <property type="term" value="C:respiratory chain complex I"/>
    <property type="evidence" value="ECO:0000314"/>
    <property type="project" value="FlyBase"/>
</dbReference>
<dbReference type="GO" id="GO:0030018">
    <property type="term" value="C:Z disc"/>
    <property type="evidence" value="ECO:0007669"/>
    <property type="project" value="UniProtKB-SubCell"/>
</dbReference>
<dbReference type="GO" id="GO:0006120">
    <property type="term" value="P:mitochondrial electron transport, NADH to ubiquinone"/>
    <property type="evidence" value="ECO:0000305"/>
    <property type="project" value="FlyBase"/>
</dbReference>
<name>NDUA3_DROME</name>
<keyword id="KW-0002">3D-structure</keyword>
<keyword id="KW-0963">Cytoplasm</keyword>
<keyword id="KW-0249">Electron transport</keyword>
<keyword id="KW-0472">Membrane</keyword>
<keyword id="KW-0496">Mitochondrion</keyword>
<keyword id="KW-0999">Mitochondrion inner membrane</keyword>
<keyword id="KW-1185">Reference proteome</keyword>
<keyword id="KW-0679">Respiratory chain</keyword>
<keyword id="KW-0812">Transmembrane</keyword>
<keyword id="KW-1133">Transmembrane helix</keyword>
<keyword id="KW-0813">Transport</keyword>
<accession>Q9W380</accession>
<organism evidence="12">
    <name type="scientific">Drosophila melanogaster</name>
    <name type="common">Fruit fly</name>
    <dbReference type="NCBI Taxonomy" id="7227"/>
    <lineage>
        <taxon>Eukaryota</taxon>
        <taxon>Metazoa</taxon>
        <taxon>Ecdysozoa</taxon>
        <taxon>Arthropoda</taxon>
        <taxon>Hexapoda</taxon>
        <taxon>Insecta</taxon>
        <taxon>Pterygota</taxon>
        <taxon>Neoptera</taxon>
        <taxon>Endopterygota</taxon>
        <taxon>Diptera</taxon>
        <taxon>Brachycera</taxon>
        <taxon>Muscomorpha</taxon>
        <taxon>Ephydroidea</taxon>
        <taxon>Drosophilidae</taxon>
        <taxon>Drosophila</taxon>
        <taxon>Sophophora</taxon>
    </lineage>
</organism>